<feature type="initiator methionine" description="Removed" evidence="1">
    <location>
        <position position="1"/>
    </location>
</feature>
<feature type="chain" id="PRO_0000158273" description="Histone H4">
    <location>
        <begin position="2"/>
        <end position="103"/>
    </location>
</feature>
<feature type="DNA-binding region">
    <location>
        <begin position="17"/>
        <end position="21"/>
    </location>
</feature>
<feature type="region of interest" description="Disordered" evidence="3">
    <location>
        <begin position="1"/>
        <end position="20"/>
    </location>
</feature>
<feature type="compositionally biased region" description="Gly residues" evidence="3">
    <location>
        <begin position="1"/>
        <end position="14"/>
    </location>
</feature>
<feature type="modified residue" description="N6-acetyl-N6-methyllysine; alternate" evidence="2">
    <location>
        <position position="6"/>
    </location>
</feature>
<feature type="modified residue" description="N6-acetyl-N6-methyllysine; alternate" evidence="2">
    <location>
        <position position="13"/>
    </location>
</feature>
<dbReference type="EMBL" id="X91508">
    <property type="protein sequence ID" value="CAA62808.1"/>
    <property type="molecule type" value="mRNA"/>
</dbReference>
<dbReference type="SMR" id="P84048"/>
<dbReference type="GO" id="GO:0000786">
    <property type="term" value="C:nucleosome"/>
    <property type="evidence" value="ECO:0000250"/>
    <property type="project" value="UniProtKB"/>
</dbReference>
<dbReference type="GO" id="GO:0005634">
    <property type="term" value="C:nucleus"/>
    <property type="evidence" value="ECO:0007669"/>
    <property type="project" value="UniProtKB-SubCell"/>
</dbReference>
<dbReference type="GO" id="GO:0003677">
    <property type="term" value="F:DNA binding"/>
    <property type="evidence" value="ECO:0000250"/>
    <property type="project" value="UniProtKB"/>
</dbReference>
<dbReference type="GO" id="GO:0046982">
    <property type="term" value="F:protein heterodimerization activity"/>
    <property type="evidence" value="ECO:0007669"/>
    <property type="project" value="InterPro"/>
</dbReference>
<dbReference type="GO" id="GO:0030527">
    <property type="term" value="F:structural constituent of chromatin"/>
    <property type="evidence" value="ECO:0007669"/>
    <property type="project" value="InterPro"/>
</dbReference>
<dbReference type="GO" id="GO:0006334">
    <property type="term" value="P:nucleosome assembly"/>
    <property type="evidence" value="ECO:0000250"/>
    <property type="project" value="UniProtKB"/>
</dbReference>
<dbReference type="CDD" id="cd22912">
    <property type="entry name" value="HFD_H4"/>
    <property type="match status" value="1"/>
</dbReference>
<dbReference type="FunFam" id="1.10.20.10:FF:000002">
    <property type="entry name" value="Histone H4"/>
    <property type="match status" value="1"/>
</dbReference>
<dbReference type="Gene3D" id="1.10.20.10">
    <property type="entry name" value="Histone, subunit A"/>
    <property type="match status" value="1"/>
</dbReference>
<dbReference type="InterPro" id="IPR035425">
    <property type="entry name" value="CENP-T/H4_C"/>
</dbReference>
<dbReference type="InterPro" id="IPR009072">
    <property type="entry name" value="Histone-fold"/>
</dbReference>
<dbReference type="InterPro" id="IPR001951">
    <property type="entry name" value="Histone_H4"/>
</dbReference>
<dbReference type="InterPro" id="IPR019809">
    <property type="entry name" value="Histone_H4_CS"/>
</dbReference>
<dbReference type="InterPro" id="IPR004823">
    <property type="entry name" value="TAF_TATA-bd_Histone-like_dom"/>
</dbReference>
<dbReference type="PANTHER" id="PTHR10484">
    <property type="entry name" value="HISTONE H4"/>
    <property type="match status" value="1"/>
</dbReference>
<dbReference type="Pfam" id="PF15511">
    <property type="entry name" value="CENP-T_C"/>
    <property type="match status" value="1"/>
</dbReference>
<dbReference type="PRINTS" id="PR00623">
    <property type="entry name" value="HISTONEH4"/>
</dbReference>
<dbReference type="SMART" id="SM00417">
    <property type="entry name" value="H4"/>
    <property type="match status" value="1"/>
</dbReference>
<dbReference type="SMART" id="SM00803">
    <property type="entry name" value="TAF"/>
    <property type="match status" value="1"/>
</dbReference>
<dbReference type="SUPFAM" id="SSF47113">
    <property type="entry name" value="Histone-fold"/>
    <property type="match status" value="1"/>
</dbReference>
<dbReference type="PROSITE" id="PS00047">
    <property type="entry name" value="HISTONE_H4"/>
    <property type="match status" value="1"/>
</dbReference>
<accession>P84048</accession>
<accession>P02307</accession>
<accession>Q9VFH7</accession>
<comment type="function">
    <text>Core component of nucleosome. Nucleosomes wrap and compact DNA into chromatin, limiting DNA accessibility to the cellular machineries which require DNA as a template. Histones thereby play a central role in transcription regulation, DNA repair, DNA replication and chromosomal stability. DNA accessibility is regulated via a complex set of post-translational modifications of histones, also called histone code, and nucleosome remodeling.</text>
</comment>
<comment type="subunit">
    <text>The nucleosome is a histone octamer containing two molecules each of H2A, H2B, H3 and H4 assembled in one H3-H4 heterotetramer and two H2A-H2B heterodimers. The octamer wraps approximately 147 bp of DNA.</text>
</comment>
<comment type="subcellular location">
    <subcellularLocation>
        <location evidence="1">Nucleus</location>
    </subcellularLocation>
    <subcellularLocation>
        <location evidence="1">Chromosome</location>
    </subcellularLocation>
</comment>
<comment type="similarity">
    <text evidence="4">Belongs to the histone H4 family.</text>
</comment>
<proteinExistence type="inferred from homology"/>
<gene>
    <name type="primary">His4</name>
    <name type="synonym">H4</name>
</gene>
<evidence type="ECO:0000250" key="1"/>
<evidence type="ECO:0000250" key="2">
    <source>
        <dbReference type="UniProtKB" id="P62805"/>
    </source>
</evidence>
<evidence type="ECO:0000256" key="3">
    <source>
        <dbReference type="SAM" id="MobiDB-lite"/>
    </source>
</evidence>
<evidence type="ECO:0000305" key="4"/>
<protein>
    <recommendedName>
        <fullName>Histone H4</fullName>
    </recommendedName>
</protein>
<keyword id="KW-0007">Acetylation</keyword>
<keyword id="KW-0158">Chromosome</keyword>
<keyword id="KW-0238">DNA-binding</keyword>
<keyword id="KW-0488">Methylation</keyword>
<keyword id="KW-0544">Nucleosome core</keyword>
<keyword id="KW-0539">Nucleus</keyword>
<reference key="1">
    <citation type="submission" date="1995-09" db="EMBL/GenBank/DDBJ databases">
        <title>Fast cloning and sequencing of histone H4 and actin messenger RNA fragments and their uses as control.</title>
        <authorList>
            <person name="Hamelin E."/>
            <person name="Bigot Y.Y.B."/>
            <person name="Rouleux F."/>
            <person name="Renault S."/>
            <person name="Periquet G."/>
        </authorList>
    </citation>
    <scope>NUCLEOTIDE SEQUENCE [MRNA]</scope>
</reference>
<name>H4_ACRAS</name>
<organism>
    <name type="scientific">Acrolepiopsis assectella</name>
    <name type="common">Leek moth</name>
    <dbReference type="NCBI Taxonomy" id="57686"/>
    <lineage>
        <taxon>Eukaryota</taxon>
        <taxon>Metazoa</taxon>
        <taxon>Ecdysozoa</taxon>
        <taxon>Arthropoda</taxon>
        <taxon>Hexapoda</taxon>
        <taxon>Insecta</taxon>
        <taxon>Pterygota</taxon>
        <taxon>Neoptera</taxon>
        <taxon>Endopterygota</taxon>
        <taxon>Lepidoptera</taxon>
        <taxon>Glossata</taxon>
        <taxon>Ditrysia</taxon>
        <taxon>Yponomeutoidea</taxon>
        <taxon>Plutellidae</taxon>
        <taxon>Acrolepiopsis</taxon>
    </lineage>
</organism>
<sequence>MTGRGKGGKGLGKGGAKRHRKVLRDNIQGITKPAIRRLARRGGVKRISGLIYEETRGVLKVFLENVIRDAVTYTEHAKRKTVTAMDVVYALKRQGRTLYGFGG</sequence>